<evidence type="ECO:0000255" key="1">
    <source>
        <dbReference type="HAMAP-Rule" id="MF_00361"/>
    </source>
</evidence>
<protein>
    <recommendedName>
        <fullName evidence="1">NAD kinase</fullName>
        <ecNumber evidence="1">2.7.1.23</ecNumber>
    </recommendedName>
    <alternativeName>
        <fullName evidence="1">ATP-dependent NAD kinase</fullName>
    </alternativeName>
</protein>
<feature type="chain" id="PRO_1000059880" description="NAD kinase">
    <location>
        <begin position="1"/>
        <end position="270"/>
    </location>
</feature>
<feature type="active site" description="Proton acceptor" evidence="1">
    <location>
        <position position="63"/>
    </location>
</feature>
<feature type="binding site" evidence="1">
    <location>
        <begin position="63"/>
        <end position="64"/>
    </location>
    <ligand>
        <name>NAD(+)</name>
        <dbReference type="ChEBI" id="CHEBI:57540"/>
    </ligand>
</feature>
<feature type="binding site" evidence="1">
    <location>
        <begin position="131"/>
        <end position="132"/>
    </location>
    <ligand>
        <name>NAD(+)</name>
        <dbReference type="ChEBI" id="CHEBI:57540"/>
    </ligand>
</feature>
<feature type="binding site" evidence="1">
    <location>
        <position position="142"/>
    </location>
    <ligand>
        <name>NAD(+)</name>
        <dbReference type="ChEBI" id="CHEBI:57540"/>
    </ligand>
</feature>
<feature type="binding site" evidence="1">
    <location>
        <position position="159"/>
    </location>
    <ligand>
        <name>NAD(+)</name>
        <dbReference type="ChEBI" id="CHEBI:57540"/>
    </ligand>
</feature>
<feature type="binding site" evidence="1">
    <location>
        <position position="161"/>
    </location>
    <ligand>
        <name>NAD(+)</name>
        <dbReference type="ChEBI" id="CHEBI:57540"/>
    </ligand>
</feature>
<feature type="binding site" evidence="1">
    <location>
        <begin position="172"/>
        <end position="177"/>
    </location>
    <ligand>
        <name>NAD(+)</name>
        <dbReference type="ChEBI" id="CHEBI:57540"/>
    </ligand>
</feature>
<feature type="binding site" evidence="1">
    <location>
        <position position="196"/>
    </location>
    <ligand>
        <name>NAD(+)</name>
        <dbReference type="ChEBI" id="CHEBI:57540"/>
    </ligand>
</feature>
<feature type="binding site" evidence="1">
    <location>
        <position position="230"/>
    </location>
    <ligand>
        <name>NAD(+)</name>
        <dbReference type="ChEBI" id="CHEBI:57540"/>
    </ligand>
</feature>
<sequence length="270" mass="29135">MKIVLVSRIDEADALRYTASLARELEGLGHEVALEEGTAAHLGEGGISFEEIDGDLVVVVGGDGSVLLTVHQMKKQVPVLGINWGEVGFLADLEPDEAGTFFAAHTEGFHIERRMRVSLSVNGVPLGDALNEGLVVTDRPAKMLRFGVYVDGTPAERFRADGLLVSTPTGSTAYAMSAGGPIVDPQIEGFLLVPLAPYMLSSRPHLISTGRNLEITLETEKPAHLVIDGQSTFELEKEATLTVKKSDQPALFVHTGKPFFEKVNHKLRNL</sequence>
<accession>A3CU51</accession>
<name>NADK_METMJ</name>
<comment type="function">
    <text evidence="1">Involved in the regulation of the intracellular balance of NAD and NADP, and is a key enzyme in the biosynthesis of NADP. Catalyzes specifically the phosphorylation on 2'-hydroxyl of the adenosine moiety of NAD to yield NADP.</text>
</comment>
<comment type="catalytic activity">
    <reaction evidence="1">
        <text>NAD(+) + ATP = ADP + NADP(+) + H(+)</text>
        <dbReference type="Rhea" id="RHEA:18629"/>
        <dbReference type="ChEBI" id="CHEBI:15378"/>
        <dbReference type="ChEBI" id="CHEBI:30616"/>
        <dbReference type="ChEBI" id="CHEBI:57540"/>
        <dbReference type="ChEBI" id="CHEBI:58349"/>
        <dbReference type="ChEBI" id="CHEBI:456216"/>
        <dbReference type="EC" id="2.7.1.23"/>
    </reaction>
</comment>
<comment type="cofactor">
    <cofactor evidence="1">
        <name>a divalent metal cation</name>
        <dbReference type="ChEBI" id="CHEBI:60240"/>
    </cofactor>
</comment>
<comment type="subcellular location">
    <subcellularLocation>
        <location evidence="1">Cytoplasm</location>
    </subcellularLocation>
</comment>
<comment type="similarity">
    <text evidence="1">Belongs to the NAD kinase family.</text>
</comment>
<organism>
    <name type="scientific">Methanoculleus marisnigri (strain ATCC 35101 / DSM 1498 / JR1)</name>
    <dbReference type="NCBI Taxonomy" id="368407"/>
    <lineage>
        <taxon>Archaea</taxon>
        <taxon>Methanobacteriati</taxon>
        <taxon>Methanobacteriota</taxon>
        <taxon>Stenosarchaea group</taxon>
        <taxon>Methanomicrobia</taxon>
        <taxon>Methanomicrobiales</taxon>
        <taxon>Methanomicrobiaceae</taxon>
        <taxon>Methanoculleus</taxon>
    </lineage>
</organism>
<reference key="1">
    <citation type="journal article" date="2009" name="Stand. Genomic Sci.">
        <title>Complete genome sequence of Methanoculleus marisnigri Romesser et al. 1981 type strain JR1.</title>
        <authorList>
            <person name="Anderson I.J."/>
            <person name="Sieprawska-Lupa M."/>
            <person name="Lapidus A."/>
            <person name="Nolan M."/>
            <person name="Copeland A."/>
            <person name="Glavina Del Rio T."/>
            <person name="Tice H."/>
            <person name="Dalin E."/>
            <person name="Barry K."/>
            <person name="Saunders E."/>
            <person name="Han C."/>
            <person name="Brettin T."/>
            <person name="Detter J.C."/>
            <person name="Bruce D."/>
            <person name="Mikhailova N."/>
            <person name="Pitluck S."/>
            <person name="Hauser L."/>
            <person name="Land M."/>
            <person name="Lucas S."/>
            <person name="Richardson P."/>
            <person name="Whitman W.B."/>
            <person name="Kyrpides N.C."/>
        </authorList>
    </citation>
    <scope>NUCLEOTIDE SEQUENCE [LARGE SCALE GENOMIC DNA]</scope>
    <source>
        <strain>ATCC 35101 / DSM 1498 / JR1</strain>
    </source>
</reference>
<gene>
    <name evidence="1" type="primary">nadK</name>
    <name type="ordered locus">Memar_0968</name>
</gene>
<keyword id="KW-0067">ATP-binding</keyword>
<keyword id="KW-0963">Cytoplasm</keyword>
<keyword id="KW-0418">Kinase</keyword>
<keyword id="KW-0520">NAD</keyword>
<keyword id="KW-0521">NADP</keyword>
<keyword id="KW-0547">Nucleotide-binding</keyword>
<keyword id="KW-0808">Transferase</keyword>
<proteinExistence type="inferred from homology"/>
<dbReference type="EC" id="2.7.1.23" evidence="1"/>
<dbReference type="EMBL" id="CP000562">
    <property type="protein sequence ID" value="ABN56901.1"/>
    <property type="molecule type" value="Genomic_DNA"/>
</dbReference>
<dbReference type="RefSeq" id="WP_011843812.1">
    <property type="nucleotide sequence ID" value="NC_009051.1"/>
</dbReference>
<dbReference type="SMR" id="A3CU51"/>
<dbReference type="STRING" id="368407.Memar_0968"/>
<dbReference type="GeneID" id="4845934"/>
<dbReference type="KEGG" id="mem:Memar_0968"/>
<dbReference type="eggNOG" id="arCOG01348">
    <property type="taxonomic scope" value="Archaea"/>
</dbReference>
<dbReference type="HOGENOM" id="CLU_008831_0_2_2"/>
<dbReference type="OrthoDB" id="77798at2157"/>
<dbReference type="Proteomes" id="UP000002146">
    <property type="component" value="Chromosome"/>
</dbReference>
<dbReference type="GO" id="GO:0005737">
    <property type="term" value="C:cytoplasm"/>
    <property type="evidence" value="ECO:0007669"/>
    <property type="project" value="UniProtKB-SubCell"/>
</dbReference>
<dbReference type="GO" id="GO:0005524">
    <property type="term" value="F:ATP binding"/>
    <property type="evidence" value="ECO:0007669"/>
    <property type="project" value="UniProtKB-KW"/>
</dbReference>
<dbReference type="GO" id="GO:0046872">
    <property type="term" value="F:metal ion binding"/>
    <property type="evidence" value="ECO:0007669"/>
    <property type="project" value="UniProtKB-UniRule"/>
</dbReference>
<dbReference type="GO" id="GO:0003951">
    <property type="term" value="F:NAD+ kinase activity"/>
    <property type="evidence" value="ECO:0007669"/>
    <property type="project" value="UniProtKB-UniRule"/>
</dbReference>
<dbReference type="GO" id="GO:0019674">
    <property type="term" value="P:NAD metabolic process"/>
    <property type="evidence" value="ECO:0007669"/>
    <property type="project" value="InterPro"/>
</dbReference>
<dbReference type="GO" id="GO:0006741">
    <property type="term" value="P:NADP biosynthetic process"/>
    <property type="evidence" value="ECO:0007669"/>
    <property type="project" value="UniProtKB-UniRule"/>
</dbReference>
<dbReference type="Gene3D" id="3.40.50.10330">
    <property type="entry name" value="Probable inorganic polyphosphate/atp-NAD kinase, domain 1"/>
    <property type="match status" value="1"/>
</dbReference>
<dbReference type="Gene3D" id="2.60.200.30">
    <property type="entry name" value="Probable inorganic polyphosphate/atp-NAD kinase, domain 2"/>
    <property type="match status" value="1"/>
</dbReference>
<dbReference type="HAMAP" id="MF_00361">
    <property type="entry name" value="NAD_kinase"/>
    <property type="match status" value="1"/>
</dbReference>
<dbReference type="InterPro" id="IPR017438">
    <property type="entry name" value="ATP-NAD_kinase_N"/>
</dbReference>
<dbReference type="InterPro" id="IPR017437">
    <property type="entry name" value="ATP-NAD_kinase_PpnK-typ_C"/>
</dbReference>
<dbReference type="InterPro" id="IPR016064">
    <property type="entry name" value="NAD/diacylglycerol_kinase_sf"/>
</dbReference>
<dbReference type="InterPro" id="IPR002504">
    <property type="entry name" value="NADK"/>
</dbReference>
<dbReference type="PANTHER" id="PTHR20275:SF43">
    <property type="entry name" value="BIFUNCTIONAL NADP PHOSPHATASE_NAD KINASE"/>
    <property type="match status" value="1"/>
</dbReference>
<dbReference type="PANTHER" id="PTHR20275">
    <property type="entry name" value="NAD KINASE"/>
    <property type="match status" value="1"/>
</dbReference>
<dbReference type="Pfam" id="PF01513">
    <property type="entry name" value="NAD_kinase"/>
    <property type="match status" value="1"/>
</dbReference>
<dbReference type="Pfam" id="PF20143">
    <property type="entry name" value="NAD_kinase_C"/>
    <property type="match status" value="1"/>
</dbReference>
<dbReference type="SUPFAM" id="SSF111331">
    <property type="entry name" value="NAD kinase/diacylglycerol kinase-like"/>
    <property type="match status" value="1"/>
</dbReference>